<gene>
    <name evidence="1" type="primary">murC</name>
    <name type="ordered locus">MT2211</name>
</gene>
<organism>
    <name type="scientific">Mycobacterium tuberculosis (strain CDC 1551 / Oshkosh)</name>
    <dbReference type="NCBI Taxonomy" id="83331"/>
    <lineage>
        <taxon>Bacteria</taxon>
        <taxon>Bacillati</taxon>
        <taxon>Actinomycetota</taxon>
        <taxon>Actinomycetes</taxon>
        <taxon>Mycobacteriales</taxon>
        <taxon>Mycobacteriaceae</taxon>
        <taxon>Mycobacterium</taxon>
        <taxon>Mycobacterium tuberculosis complex</taxon>
    </lineage>
</organism>
<feature type="chain" id="PRO_0000427808" description="UDP-N-acetylmuramate--L-alanine ligase">
    <location>
        <begin position="1"/>
        <end position="494"/>
    </location>
</feature>
<feature type="binding site" evidence="1">
    <location>
        <begin position="122"/>
        <end position="128"/>
    </location>
    <ligand>
        <name>ATP</name>
        <dbReference type="ChEBI" id="CHEBI:30616"/>
    </ligand>
</feature>
<sequence>MSTEQLPPDLRRVHMVGIGGAGMSGIARILLDRGGLVSGSDAKESRGVHALRARGALIRIGHDASSLDLLPGGATAVVTTHAAIPKTNPELVEARRRGIPVVLRPAVLAKLMAGRTTLMVTGTHGKTTTTSMLIVALQHCGLDPSFAVGGELGEAGTNAHHGSGDCFVAEADESDGSLLQYTPHVAVITNIESDHLDFYGSVEAYVAVFDSFVERIVPGGALVVCTDDPGGAALAQRATELGIRVLRYGSVPGETMAATLVSWQQQGVGAVAHIRLASELATAQGPRVMRLSVPGRHMALNALGALLAAVQIGAPADEVLDGLAGFEGVRRRFELVGTCGVGKASVRVFDDYAHHPTEISATLAAARMVLEQGDGGRCMVVFQPHLYSRTKAFAAEFGRALNAADEVFVLDVYGAREQPLAGVSGASVAEHVTVPMRYVPDFSAVAQQVAAAASPGDVIVTMGAGDVTLLGPEILTALRVRANRSAPGRPGVLG</sequence>
<reference key="1">
    <citation type="journal article" date="2002" name="J. Bacteriol.">
        <title>Whole-genome comparison of Mycobacterium tuberculosis clinical and laboratory strains.</title>
        <authorList>
            <person name="Fleischmann R.D."/>
            <person name="Alland D."/>
            <person name="Eisen J.A."/>
            <person name="Carpenter L."/>
            <person name="White O."/>
            <person name="Peterson J.D."/>
            <person name="DeBoy R.T."/>
            <person name="Dodson R.J."/>
            <person name="Gwinn M.L."/>
            <person name="Haft D.H."/>
            <person name="Hickey E.K."/>
            <person name="Kolonay J.F."/>
            <person name="Nelson W.C."/>
            <person name="Umayam L.A."/>
            <person name="Ermolaeva M.D."/>
            <person name="Salzberg S.L."/>
            <person name="Delcher A."/>
            <person name="Utterback T.R."/>
            <person name="Weidman J.F."/>
            <person name="Khouri H.M."/>
            <person name="Gill J."/>
            <person name="Mikula A."/>
            <person name="Bishai W."/>
            <person name="Jacobs W.R. Jr."/>
            <person name="Venter J.C."/>
            <person name="Fraser C.M."/>
        </authorList>
    </citation>
    <scope>NUCLEOTIDE SEQUENCE [LARGE SCALE GENOMIC DNA]</scope>
    <source>
        <strain>CDC 1551 / Oshkosh</strain>
    </source>
</reference>
<keyword id="KW-0067">ATP-binding</keyword>
<keyword id="KW-0131">Cell cycle</keyword>
<keyword id="KW-0132">Cell division</keyword>
<keyword id="KW-0133">Cell shape</keyword>
<keyword id="KW-0961">Cell wall biogenesis/degradation</keyword>
<keyword id="KW-0963">Cytoplasm</keyword>
<keyword id="KW-0436">Ligase</keyword>
<keyword id="KW-0547">Nucleotide-binding</keyword>
<keyword id="KW-0573">Peptidoglycan synthesis</keyword>
<keyword id="KW-1185">Reference proteome</keyword>
<accession>P9WJL6</accession>
<accession>L0TAC3</accession>
<accession>O06225</accession>
<accession>P65472</accession>
<evidence type="ECO:0000255" key="1">
    <source>
        <dbReference type="HAMAP-Rule" id="MF_00046"/>
    </source>
</evidence>
<name>MURC_MYCTO</name>
<comment type="function">
    <text evidence="1">Cell wall formation.</text>
</comment>
<comment type="catalytic activity">
    <reaction evidence="1">
        <text>UDP-N-acetyl-alpha-D-muramate + L-alanine + ATP = UDP-N-acetyl-alpha-D-muramoyl-L-alanine + ADP + phosphate + H(+)</text>
        <dbReference type="Rhea" id="RHEA:23372"/>
        <dbReference type="ChEBI" id="CHEBI:15378"/>
        <dbReference type="ChEBI" id="CHEBI:30616"/>
        <dbReference type="ChEBI" id="CHEBI:43474"/>
        <dbReference type="ChEBI" id="CHEBI:57972"/>
        <dbReference type="ChEBI" id="CHEBI:70757"/>
        <dbReference type="ChEBI" id="CHEBI:83898"/>
        <dbReference type="ChEBI" id="CHEBI:456216"/>
        <dbReference type="EC" id="6.3.2.8"/>
    </reaction>
</comment>
<comment type="pathway">
    <text evidence="1">Cell wall biogenesis; peptidoglycan biosynthesis.</text>
</comment>
<comment type="subcellular location">
    <subcellularLocation>
        <location evidence="1">Cytoplasm</location>
    </subcellularLocation>
</comment>
<comment type="similarity">
    <text evidence="1">Belongs to the MurCDEF family.</text>
</comment>
<proteinExistence type="inferred from homology"/>
<dbReference type="EC" id="6.3.2.8" evidence="1"/>
<dbReference type="EMBL" id="AE000516">
    <property type="protein sequence ID" value="AAK46495.1"/>
    <property type="molecule type" value="Genomic_DNA"/>
</dbReference>
<dbReference type="PIR" id="D70579">
    <property type="entry name" value="D70579"/>
</dbReference>
<dbReference type="RefSeq" id="WP_003411159.1">
    <property type="nucleotide sequence ID" value="NZ_KK341227.1"/>
</dbReference>
<dbReference type="SMR" id="P9WJL6"/>
<dbReference type="KEGG" id="mtc:MT2211"/>
<dbReference type="PATRIC" id="fig|83331.31.peg.2384"/>
<dbReference type="HOGENOM" id="CLU_028104_2_2_11"/>
<dbReference type="UniPathway" id="UPA00219"/>
<dbReference type="Proteomes" id="UP000001020">
    <property type="component" value="Chromosome"/>
</dbReference>
<dbReference type="GO" id="GO:0005737">
    <property type="term" value="C:cytoplasm"/>
    <property type="evidence" value="ECO:0007669"/>
    <property type="project" value="UniProtKB-SubCell"/>
</dbReference>
<dbReference type="GO" id="GO:0005524">
    <property type="term" value="F:ATP binding"/>
    <property type="evidence" value="ECO:0007669"/>
    <property type="project" value="UniProtKB-UniRule"/>
</dbReference>
<dbReference type="GO" id="GO:0008763">
    <property type="term" value="F:UDP-N-acetylmuramate-L-alanine ligase activity"/>
    <property type="evidence" value="ECO:0007669"/>
    <property type="project" value="UniProtKB-UniRule"/>
</dbReference>
<dbReference type="GO" id="GO:0051301">
    <property type="term" value="P:cell division"/>
    <property type="evidence" value="ECO:0007669"/>
    <property type="project" value="UniProtKB-KW"/>
</dbReference>
<dbReference type="GO" id="GO:0071555">
    <property type="term" value="P:cell wall organization"/>
    <property type="evidence" value="ECO:0007669"/>
    <property type="project" value="UniProtKB-KW"/>
</dbReference>
<dbReference type="GO" id="GO:0009252">
    <property type="term" value="P:peptidoglycan biosynthetic process"/>
    <property type="evidence" value="ECO:0007669"/>
    <property type="project" value="UniProtKB-UniRule"/>
</dbReference>
<dbReference type="GO" id="GO:0008360">
    <property type="term" value="P:regulation of cell shape"/>
    <property type="evidence" value="ECO:0007669"/>
    <property type="project" value="UniProtKB-KW"/>
</dbReference>
<dbReference type="FunFam" id="3.40.50.720:FF:000046">
    <property type="entry name" value="UDP-N-acetylmuramate--L-alanine ligase"/>
    <property type="match status" value="1"/>
</dbReference>
<dbReference type="FunFam" id="3.90.190.20:FF:000016">
    <property type="entry name" value="UDP-N-acetylmuramate--L-alanine ligase"/>
    <property type="match status" value="1"/>
</dbReference>
<dbReference type="Gene3D" id="3.90.190.20">
    <property type="entry name" value="Mur ligase, C-terminal domain"/>
    <property type="match status" value="1"/>
</dbReference>
<dbReference type="Gene3D" id="3.40.1190.10">
    <property type="entry name" value="Mur-like, catalytic domain"/>
    <property type="match status" value="1"/>
</dbReference>
<dbReference type="Gene3D" id="3.40.50.720">
    <property type="entry name" value="NAD(P)-binding Rossmann-like Domain"/>
    <property type="match status" value="1"/>
</dbReference>
<dbReference type="HAMAP" id="MF_00046">
    <property type="entry name" value="MurC"/>
    <property type="match status" value="1"/>
</dbReference>
<dbReference type="InterPro" id="IPR036565">
    <property type="entry name" value="Mur-like_cat_sf"/>
</dbReference>
<dbReference type="InterPro" id="IPR004101">
    <property type="entry name" value="Mur_ligase_C"/>
</dbReference>
<dbReference type="InterPro" id="IPR036615">
    <property type="entry name" value="Mur_ligase_C_dom_sf"/>
</dbReference>
<dbReference type="InterPro" id="IPR013221">
    <property type="entry name" value="Mur_ligase_cen"/>
</dbReference>
<dbReference type="InterPro" id="IPR000713">
    <property type="entry name" value="Mur_ligase_N"/>
</dbReference>
<dbReference type="InterPro" id="IPR050061">
    <property type="entry name" value="MurCDEF_pg_biosynth"/>
</dbReference>
<dbReference type="InterPro" id="IPR005758">
    <property type="entry name" value="UDP-N-AcMur_Ala_ligase_MurC"/>
</dbReference>
<dbReference type="NCBIfam" id="TIGR01082">
    <property type="entry name" value="murC"/>
    <property type="match status" value="1"/>
</dbReference>
<dbReference type="PANTHER" id="PTHR43445:SF3">
    <property type="entry name" value="UDP-N-ACETYLMURAMATE--L-ALANINE LIGASE"/>
    <property type="match status" value="1"/>
</dbReference>
<dbReference type="PANTHER" id="PTHR43445">
    <property type="entry name" value="UDP-N-ACETYLMURAMATE--L-ALANINE LIGASE-RELATED"/>
    <property type="match status" value="1"/>
</dbReference>
<dbReference type="Pfam" id="PF01225">
    <property type="entry name" value="Mur_ligase"/>
    <property type="match status" value="1"/>
</dbReference>
<dbReference type="Pfam" id="PF02875">
    <property type="entry name" value="Mur_ligase_C"/>
    <property type="match status" value="1"/>
</dbReference>
<dbReference type="Pfam" id="PF08245">
    <property type="entry name" value="Mur_ligase_M"/>
    <property type="match status" value="1"/>
</dbReference>
<dbReference type="SUPFAM" id="SSF51984">
    <property type="entry name" value="MurCD N-terminal domain"/>
    <property type="match status" value="1"/>
</dbReference>
<dbReference type="SUPFAM" id="SSF53623">
    <property type="entry name" value="MurD-like peptide ligases, catalytic domain"/>
    <property type="match status" value="1"/>
</dbReference>
<dbReference type="SUPFAM" id="SSF53244">
    <property type="entry name" value="MurD-like peptide ligases, peptide-binding domain"/>
    <property type="match status" value="1"/>
</dbReference>
<protein>
    <recommendedName>
        <fullName evidence="1">UDP-N-acetylmuramate--L-alanine ligase</fullName>
        <ecNumber evidence="1">6.3.2.8</ecNumber>
    </recommendedName>
    <alternativeName>
        <fullName evidence="1">UDP-N-acetylmuramoyl-L-alanine synthetase</fullName>
    </alternativeName>
</protein>